<organism>
    <name type="scientific">Anaeromyxobacter sp. (strain K)</name>
    <dbReference type="NCBI Taxonomy" id="447217"/>
    <lineage>
        <taxon>Bacteria</taxon>
        <taxon>Pseudomonadati</taxon>
        <taxon>Myxococcota</taxon>
        <taxon>Myxococcia</taxon>
        <taxon>Myxococcales</taxon>
        <taxon>Cystobacterineae</taxon>
        <taxon>Anaeromyxobacteraceae</taxon>
        <taxon>Anaeromyxobacter</taxon>
    </lineage>
</organism>
<gene>
    <name evidence="1" type="primary">acpS</name>
    <name type="ordered locus">AnaeK_2366</name>
</gene>
<keyword id="KW-0963">Cytoplasm</keyword>
<keyword id="KW-0275">Fatty acid biosynthesis</keyword>
<keyword id="KW-0276">Fatty acid metabolism</keyword>
<keyword id="KW-0444">Lipid biosynthesis</keyword>
<keyword id="KW-0443">Lipid metabolism</keyword>
<keyword id="KW-0460">Magnesium</keyword>
<keyword id="KW-0479">Metal-binding</keyword>
<keyword id="KW-0808">Transferase</keyword>
<comment type="function">
    <text evidence="1">Transfers the 4'-phosphopantetheine moiety from coenzyme A to a Ser of acyl-carrier-protein.</text>
</comment>
<comment type="catalytic activity">
    <reaction evidence="1">
        <text>apo-[ACP] + CoA = holo-[ACP] + adenosine 3',5'-bisphosphate + H(+)</text>
        <dbReference type="Rhea" id="RHEA:12068"/>
        <dbReference type="Rhea" id="RHEA-COMP:9685"/>
        <dbReference type="Rhea" id="RHEA-COMP:9690"/>
        <dbReference type="ChEBI" id="CHEBI:15378"/>
        <dbReference type="ChEBI" id="CHEBI:29999"/>
        <dbReference type="ChEBI" id="CHEBI:57287"/>
        <dbReference type="ChEBI" id="CHEBI:58343"/>
        <dbReference type="ChEBI" id="CHEBI:64479"/>
        <dbReference type="EC" id="2.7.8.7"/>
    </reaction>
</comment>
<comment type="cofactor">
    <cofactor evidence="1">
        <name>Mg(2+)</name>
        <dbReference type="ChEBI" id="CHEBI:18420"/>
    </cofactor>
</comment>
<comment type="subcellular location">
    <subcellularLocation>
        <location evidence="1">Cytoplasm</location>
    </subcellularLocation>
</comment>
<comment type="similarity">
    <text evidence="1">Belongs to the P-Pant transferase superfamily. AcpS family.</text>
</comment>
<protein>
    <recommendedName>
        <fullName evidence="1">Holo-[acyl-carrier-protein] synthase</fullName>
        <shortName evidence="1">Holo-ACP synthase</shortName>
        <ecNumber evidence="1">2.7.8.7</ecNumber>
    </recommendedName>
    <alternativeName>
        <fullName evidence="1">4'-phosphopantetheinyl transferase AcpS</fullName>
    </alternativeName>
</protein>
<name>ACPS_ANASK</name>
<dbReference type="EC" id="2.7.8.7" evidence="1"/>
<dbReference type="EMBL" id="CP001131">
    <property type="protein sequence ID" value="ACG73593.1"/>
    <property type="molecule type" value="Genomic_DNA"/>
</dbReference>
<dbReference type="RefSeq" id="WP_012526383.1">
    <property type="nucleotide sequence ID" value="NC_011145.1"/>
</dbReference>
<dbReference type="SMR" id="B4UEM2"/>
<dbReference type="KEGG" id="ank:AnaeK_2366"/>
<dbReference type="HOGENOM" id="CLU_089696_0_0_7"/>
<dbReference type="OrthoDB" id="517356at2"/>
<dbReference type="Proteomes" id="UP000001871">
    <property type="component" value="Chromosome"/>
</dbReference>
<dbReference type="GO" id="GO:0005737">
    <property type="term" value="C:cytoplasm"/>
    <property type="evidence" value="ECO:0007669"/>
    <property type="project" value="UniProtKB-SubCell"/>
</dbReference>
<dbReference type="GO" id="GO:0008897">
    <property type="term" value="F:holo-[acyl-carrier-protein] synthase activity"/>
    <property type="evidence" value="ECO:0007669"/>
    <property type="project" value="UniProtKB-UniRule"/>
</dbReference>
<dbReference type="GO" id="GO:0000287">
    <property type="term" value="F:magnesium ion binding"/>
    <property type="evidence" value="ECO:0007669"/>
    <property type="project" value="UniProtKB-UniRule"/>
</dbReference>
<dbReference type="GO" id="GO:0006633">
    <property type="term" value="P:fatty acid biosynthetic process"/>
    <property type="evidence" value="ECO:0007669"/>
    <property type="project" value="UniProtKB-UniRule"/>
</dbReference>
<dbReference type="Gene3D" id="3.90.470.20">
    <property type="entry name" value="4'-phosphopantetheinyl transferase domain"/>
    <property type="match status" value="1"/>
</dbReference>
<dbReference type="HAMAP" id="MF_00101">
    <property type="entry name" value="AcpS"/>
    <property type="match status" value="1"/>
</dbReference>
<dbReference type="InterPro" id="IPR008278">
    <property type="entry name" value="4-PPantetheinyl_Trfase_dom"/>
</dbReference>
<dbReference type="InterPro" id="IPR037143">
    <property type="entry name" value="4-PPantetheinyl_Trfase_dom_sf"/>
</dbReference>
<dbReference type="InterPro" id="IPR002582">
    <property type="entry name" value="ACPS"/>
</dbReference>
<dbReference type="InterPro" id="IPR004568">
    <property type="entry name" value="Ppantetheine-prot_Trfase_dom"/>
</dbReference>
<dbReference type="NCBIfam" id="TIGR00516">
    <property type="entry name" value="acpS"/>
    <property type="match status" value="1"/>
</dbReference>
<dbReference type="NCBIfam" id="TIGR00556">
    <property type="entry name" value="pantethn_trn"/>
    <property type="match status" value="1"/>
</dbReference>
<dbReference type="NCBIfam" id="NF000832">
    <property type="entry name" value="PRK00070.3-2"/>
    <property type="match status" value="1"/>
</dbReference>
<dbReference type="Pfam" id="PF01648">
    <property type="entry name" value="ACPS"/>
    <property type="match status" value="1"/>
</dbReference>
<dbReference type="SUPFAM" id="SSF56214">
    <property type="entry name" value="4'-phosphopantetheinyl transferase"/>
    <property type="match status" value="1"/>
</dbReference>
<feature type="chain" id="PRO_1000093853" description="Holo-[acyl-carrier-protein] synthase">
    <location>
        <begin position="1"/>
        <end position="128"/>
    </location>
</feature>
<feature type="binding site" evidence="1">
    <location>
        <position position="8"/>
    </location>
    <ligand>
        <name>Mg(2+)</name>
        <dbReference type="ChEBI" id="CHEBI:18420"/>
    </ligand>
</feature>
<feature type="binding site" evidence="1">
    <location>
        <position position="60"/>
    </location>
    <ligand>
        <name>Mg(2+)</name>
        <dbReference type="ChEBI" id="CHEBI:18420"/>
    </ligand>
</feature>
<sequence>MILGLGLDVVEVARIQRILAGPPARAERFLARVFAPSERAYCDARQDRATRYAARFAAKEAAVKALGTPEGVRWLDLVVERGSGAPSLALDGLAADAARRLGVARVHLTLTHDAGVAVAAVILEGTGP</sequence>
<accession>B4UEM2</accession>
<evidence type="ECO:0000255" key="1">
    <source>
        <dbReference type="HAMAP-Rule" id="MF_00101"/>
    </source>
</evidence>
<reference key="1">
    <citation type="submission" date="2008-08" db="EMBL/GenBank/DDBJ databases">
        <title>Complete sequence of Anaeromyxobacter sp. K.</title>
        <authorList>
            <consortium name="US DOE Joint Genome Institute"/>
            <person name="Lucas S."/>
            <person name="Copeland A."/>
            <person name="Lapidus A."/>
            <person name="Glavina del Rio T."/>
            <person name="Dalin E."/>
            <person name="Tice H."/>
            <person name="Bruce D."/>
            <person name="Goodwin L."/>
            <person name="Pitluck S."/>
            <person name="Saunders E."/>
            <person name="Brettin T."/>
            <person name="Detter J.C."/>
            <person name="Han C."/>
            <person name="Larimer F."/>
            <person name="Land M."/>
            <person name="Hauser L."/>
            <person name="Kyrpides N."/>
            <person name="Ovchinnikiva G."/>
            <person name="Beliaev A."/>
        </authorList>
    </citation>
    <scope>NUCLEOTIDE SEQUENCE [LARGE SCALE GENOMIC DNA]</scope>
    <source>
        <strain>K</strain>
    </source>
</reference>
<proteinExistence type="inferred from homology"/>